<proteinExistence type="evidence at protein level"/>
<dbReference type="EMBL" id="Z18939">
    <property type="protein sequence ID" value="CAA79372.1"/>
    <property type="molecule type" value="Genomic_DNA"/>
</dbReference>
<dbReference type="EMBL" id="X60711">
    <property type="protein sequence ID" value="CAA43121.1"/>
    <property type="molecule type" value="Genomic_DNA"/>
</dbReference>
<dbReference type="PIR" id="S16619">
    <property type="entry name" value="S16619"/>
</dbReference>
<dbReference type="PDB" id="2MAF">
    <property type="method" value="NMR"/>
    <property type="chains" value="A=1-238"/>
</dbReference>
<dbReference type="PDB" id="2MLH">
    <property type="method" value="NMR"/>
    <property type="chains" value="A=1-238"/>
</dbReference>
<dbReference type="PDB" id="8QWQ">
    <property type="method" value="NMR"/>
    <property type="chains" value="A=1-238"/>
</dbReference>
<dbReference type="PDBsum" id="2MAF"/>
<dbReference type="PDBsum" id="2MLH"/>
<dbReference type="PDBsum" id="8QWQ"/>
<dbReference type="SMR" id="Q04884"/>
<dbReference type="IntAct" id="Q04884">
    <property type="interactions" value="2"/>
</dbReference>
<dbReference type="MINT" id="Q04884"/>
<dbReference type="Reactome" id="R-HSA-202733">
    <property type="pathway name" value="Cell surface interactions at the vascular wall"/>
</dbReference>
<dbReference type="EvolutionaryTrace" id="Q04884"/>
<dbReference type="GO" id="GO:0009279">
    <property type="term" value="C:cell outer membrane"/>
    <property type="evidence" value="ECO:0000304"/>
    <property type="project" value="Reactome"/>
</dbReference>
<dbReference type="GO" id="GO:0015288">
    <property type="term" value="F:porin activity"/>
    <property type="evidence" value="ECO:0007669"/>
    <property type="project" value="InterPro"/>
</dbReference>
<dbReference type="FunFam" id="2.40.160.20:FF:000005">
    <property type="entry name" value="Opacity protein opA54"/>
    <property type="match status" value="1"/>
</dbReference>
<dbReference type="Gene3D" id="2.40.160.20">
    <property type="match status" value="1"/>
</dbReference>
<dbReference type="InterPro" id="IPR006315">
    <property type="entry name" value="OM_autotransptr_brl_dom"/>
</dbReference>
<dbReference type="InterPro" id="IPR011250">
    <property type="entry name" value="OMP/PagP_b-brl"/>
</dbReference>
<dbReference type="InterPro" id="IPR003394">
    <property type="entry name" value="Porin_opacity"/>
</dbReference>
<dbReference type="NCBIfam" id="TIGR01414">
    <property type="entry name" value="autotrans_barl"/>
    <property type="match status" value="1"/>
</dbReference>
<dbReference type="Pfam" id="PF02462">
    <property type="entry name" value="Opacity"/>
    <property type="match status" value="1"/>
</dbReference>
<dbReference type="SUPFAM" id="SSF56925">
    <property type="entry name" value="OMPA-like"/>
    <property type="match status" value="1"/>
</dbReference>
<gene>
    <name type="primary">opaH</name>
</gene>
<name>OPAH_NEIGO</name>
<evidence type="ECO:0000255" key="1"/>
<evidence type="ECO:0000305" key="2"/>
<evidence type="ECO:0007829" key="3">
    <source>
        <dbReference type="PDB" id="2MAF"/>
    </source>
</evidence>
<evidence type="ECO:0007829" key="4">
    <source>
        <dbReference type="PDB" id="2MLH"/>
    </source>
</evidence>
<accession>Q04884</accession>
<protein>
    <recommendedName>
        <fullName>Opacity protein opA60</fullName>
    </recommendedName>
</protein>
<organism>
    <name type="scientific">Neisseria gonorrhoeae</name>
    <dbReference type="NCBI Taxonomy" id="485"/>
    <lineage>
        <taxon>Bacteria</taxon>
        <taxon>Pseudomonadati</taxon>
        <taxon>Pseudomonadota</taxon>
        <taxon>Betaproteobacteria</taxon>
        <taxon>Neisseriales</taxon>
        <taxon>Neisseriaceae</taxon>
        <taxon>Neisseria</taxon>
    </lineage>
</organism>
<reference key="1">
    <citation type="journal article" date="1993" name="EMBO J.">
        <title>Variable opacity (Opa) outer membrane proteins account for the cell tropisms displayed by Neisseria gonorrhoeae for human leukocytes and epithelial cells.</title>
        <authorList>
            <person name="Kupsch E.-M."/>
            <person name="Knepper B."/>
            <person name="Kuroki T."/>
            <person name="Heuer I."/>
            <person name="Meyer T.F."/>
        </authorList>
    </citation>
    <scope>NUCLEOTIDE SEQUENCE [GENOMIC DNA]</scope>
    <source>
        <strain>MS11 / F3</strain>
    </source>
</reference>
<reference key="2">
    <citation type="journal article" date="1991" name="Mol. Microbiol.">
        <title>The opacity proteins of Neisseria gonorrhoeae strain MS11 are encoded by a family of 11 complete genes.</title>
        <authorList>
            <person name="Bhat K.S."/>
            <person name="Gibbs C.P."/>
            <person name="Barrera O."/>
            <person name="Morrison S.G."/>
            <person name="Jaehnig F."/>
            <person name="Stern A."/>
            <person name="Kupsch E.-M."/>
            <person name="Meyer T.F."/>
            <person name="Swanson J."/>
        </authorList>
    </citation>
    <scope>NUCLEOTIDE SEQUENCE [GENOMIC DNA]</scope>
    <source>
        <strain>MS11 / V18</strain>
    </source>
</reference>
<reference key="3">
    <citation type="journal article" date="1992" name="Mol. Microbiol.">
        <authorList>
            <person name="Bhat K.S."/>
            <person name="Gibbs C.P."/>
            <person name="Barrera O."/>
            <person name="Morrison S.G."/>
            <person name="Jaehnig F."/>
            <person name="Stern S."/>
            <person name="Kupsch E.-M."/>
            <person name="Meyer T.F."/>
            <person name="Swanson J."/>
        </authorList>
    </citation>
    <scope>ERRATUM OF PUBMED:1815562</scope>
</reference>
<feature type="signal peptide" evidence="1">
    <location>
        <begin position="1" status="less than"/>
        <end position="1"/>
    </location>
</feature>
<feature type="chain" id="PRO_0000021912" description="Opacity protein opA60">
    <location>
        <begin position="2"/>
        <end position="238" status="greater than"/>
    </location>
</feature>
<feature type="sequence variant" description="In strain: MS11 / V18.">
    <original>SED</original>
    <variation>MLKA</variation>
    <location>
        <begin position="2"/>
        <end position="4"/>
    </location>
</feature>
<feature type="sequence variant" description="In strain: MS11 / V18.">
    <original>V</original>
    <variation>M</variation>
    <location>
        <position position="234"/>
    </location>
</feature>
<feature type="non-terminal residue">
    <location>
        <position position="1"/>
    </location>
</feature>
<feature type="non-terminal residue">
    <location>
        <position position="238"/>
    </location>
</feature>
<feature type="strand" evidence="3">
    <location>
        <begin position="7"/>
        <end position="15"/>
    </location>
</feature>
<feature type="strand" evidence="3">
    <location>
        <begin position="37"/>
        <end position="39"/>
    </location>
</feature>
<feature type="strand" evidence="4">
    <location>
        <begin position="41"/>
        <end position="43"/>
    </location>
</feature>
<feature type="turn" evidence="3">
    <location>
        <begin position="49"/>
        <end position="51"/>
    </location>
</feature>
<feature type="strand" evidence="3">
    <location>
        <begin position="55"/>
        <end position="62"/>
    </location>
</feature>
<feature type="strand" evidence="3">
    <location>
        <begin position="65"/>
        <end position="72"/>
    </location>
</feature>
<feature type="strand" evidence="3">
    <location>
        <begin position="85"/>
        <end position="87"/>
    </location>
</feature>
<feature type="strand" evidence="3">
    <location>
        <begin position="89"/>
        <end position="92"/>
    </location>
</feature>
<feature type="strand" evidence="3">
    <location>
        <begin position="99"/>
        <end position="101"/>
    </location>
</feature>
<feature type="turn" evidence="4">
    <location>
        <begin position="103"/>
        <end position="105"/>
    </location>
</feature>
<feature type="strand" evidence="3">
    <location>
        <begin position="115"/>
        <end position="124"/>
    </location>
</feature>
<feature type="strand" evidence="3">
    <location>
        <begin position="128"/>
        <end position="142"/>
    </location>
</feature>
<feature type="helix" evidence="4">
    <location>
        <begin position="161"/>
        <end position="163"/>
    </location>
</feature>
<feature type="strand" evidence="4">
    <location>
        <begin position="168"/>
        <end position="170"/>
    </location>
</feature>
<feature type="strand" evidence="3">
    <location>
        <begin position="171"/>
        <end position="173"/>
    </location>
</feature>
<feature type="turn" evidence="3">
    <location>
        <begin position="180"/>
        <end position="182"/>
    </location>
</feature>
<feature type="strand" evidence="3">
    <location>
        <begin position="184"/>
        <end position="186"/>
    </location>
</feature>
<feature type="strand" evidence="3">
    <location>
        <begin position="191"/>
        <end position="194"/>
    </location>
</feature>
<feature type="strand" evidence="3">
    <location>
        <begin position="196"/>
        <end position="203"/>
    </location>
</feature>
<feature type="strand" evidence="3">
    <location>
        <begin position="206"/>
        <end position="212"/>
    </location>
</feature>
<feature type="strand" evidence="4">
    <location>
        <begin position="219"/>
        <end position="221"/>
    </location>
</feature>
<feature type="strand" evidence="3">
    <location>
        <begin position="222"/>
        <end position="224"/>
    </location>
</feature>
<feature type="strand" evidence="3">
    <location>
        <begin position="229"/>
        <end position="237"/>
    </location>
</feature>
<sequence length="238" mass="27073">ASEDGGRGPYVQADLAYAYEHITHDYPEPTAPNKNKISTVSDYFRNIRTRSVHPRVSVGYDFGGWRIAADYARYRKWNNNKYSVNIENVRIRKENGIRIDRKTENQENGTFHAVSSLGLSAIYDFQINDKFKPYIGARVAYGHVRHSIDSTKKTIEVTTVPSNAPNGAVTTYNTDPKTQNDYQSNSIRRVGLGVIAGVGFDITPKLTLDAGYRYHNWGRLENTRFKTHEASLGVRYRF</sequence>
<comment type="function">
    <text>Implicated in a number of adherence functions. OPA proteins are implicated in pathogenesis and are subject to phase variation.</text>
</comment>
<comment type="interaction">
    <interactant intactId="EBI-26495102">
        <id>Q04884</id>
    </interactant>
    <interactant intactId="EBI-4314481">
        <id>P13688</id>
        <label>CEACAM1</label>
    </interactant>
    <organismsDiffer>true</organismsDiffer>
    <experiments>3</experiments>
</comment>
<comment type="interaction">
    <interactant intactId="EBI-26495102">
        <id>Q04884</id>
    </interactant>
    <interactant intactId="EBI-12851752">
        <id>P40198</id>
        <label>CEACAM3</label>
    </interactant>
    <organismsDiffer>true</organismsDiffer>
    <experiments>3</experiments>
</comment>
<comment type="subcellular location">
    <subcellularLocation>
        <location>Cell outer membrane</location>
    </subcellularLocation>
</comment>
<comment type="similarity">
    <text evidence="2">Belongs to the opacity porin family.</text>
</comment>
<keyword id="KW-0002">3D-structure</keyword>
<keyword id="KW-0998">Cell outer membrane</keyword>
<keyword id="KW-0472">Membrane</keyword>
<keyword id="KW-0732">Signal</keyword>
<keyword id="KW-0812">Transmembrane</keyword>
<keyword id="KW-1134">Transmembrane beta strand</keyword>